<dbReference type="EC" id="2.10.1.1"/>
<dbReference type="EMBL" id="BX571856">
    <property type="protein sequence ID" value="CAG41338.1"/>
    <property type="molecule type" value="Genomic_DNA"/>
</dbReference>
<dbReference type="SMR" id="Q6GEG1"/>
<dbReference type="KEGG" id="sar:SAR2357"/>
<dbReference type="HOGENOM" id="CLU_010186_7_1_9"/>
<dbReference type="UniPathway" id="UPA00344"/>
<dbReference type="Proteomes" id="UP000000596">
    <property type="component" value="Chromosome"/>
</dbReference>
<dbReference type="GO" id="GO:0005829">
    <property type="term" value="C:cytosol"/>
    <property type="evidence" value="ECO:0007669"/>
    <property type="project" value="TreeGrafter"/>
</dbReference>
<dbReference type="GO" id="GO:0046872">
    <property type="term" value="F:metal ion binding"/>
    <property type="evidence" value="ECO:0007669"/>
    <property type="project" value="UniProtKB-KW"/>
</dbReference>
<dbReference type="GO" id="GO:0061599">
    <property type="term" value="F:molybdopterin molybdotransferase activity"/>
    <property type="evidence" value="ECO:0007669"/>
    <property type="project" value="UniProtKB-EC"/>
</dbReference>
<dbReference type="GO" id="GO:0006777">
    <property type="term" value="P:Mo-molybdopterin cofactor biosynthetic process"/>
    <property type="evidence" value="ECO:0007669"/>
    <property type="project" value="UniProtKB-KW"/>
</dbReference>
<dbReference type="CDD" id="cd00887">
    <property type="entry name" value="MoeA"/>
    <property type="match status" value="1"/>
</dbReference>
<dbReference type="FunFam" id="2.170.190.11:FF:000001">
    <property type="entry name" value="Molybdopterin molybdenumtransferase"/>
    <property type="match status" value="1"/>
</dbReference>
<dbReference type="FunFam" id="2.40.340.10:FF:000002">
    <property type="entry name" value="Molybdopterin molybdenumtransferase"/>
    <property type="match status" value="1"/>
</dbReference>
<dbReference type="FunFam" id="3.40.980.10:FF:000004">
    <property type="entry name" value="Molybdopterin molybdenumtransferase"/>
    <property type="match status" value="1"/>
</dbReference>
<dbReference type="Gene3D" id="3.40.980.10">
    <property type="entry name" value="MoaB/Mog-like domain"/>
    <property type="match status" value="1"/>
</dbReference>
<dbReference type="Gene3D" id="2.40.340.10">
    <property type="entry name" value="MoeA, C-terminal, domain IV"/>
    <property type="match status" value="1"/>
</dbReference>
<dbReference type="Gene3D" id="3.90.105.10">
    <property type="entry name" value="Molybdopterin biosynthesis moea protein, domain 2"/>
    <property type="match status" value="1"/>
</dbReference>
<dbReference type="Gene3D" id="2.170.190.11">
    <property type="entry name" value="Molybdopterin biosynthesis moea protein, domain 3"/>
    <property type="match status" value="1"/>
</dbReference>
<dbReference type="InterPro" id="IPR036425">
    <property type="entry name" value="MoaB/Mog-like_dom_sf"/>
</dbReference>
<dbReference type="InterPro" id="IPR001453">
    <property type="entry name" value="MoaB/Mog_dom"/>
</dbReference>
<dbReference type="InterPro" id="IPR038987">
    <property type="entry name" value="MoeA-like"/>
</dbReference>
<dbReference type="InterPro" id="IPR005111">
    <property type="entry name" value="MoeA_C_domain_IV"/>
</dbReference>
<dbReference type="InterPro" id="IPR036688">
    <property type="entry name" value="MoeA_C_domain_IV_sf"/>
</dbReference>
<dbReference type="InterPro" id="IPR005110">
    <property type="entry name" value="MoeA_linker/N"/>
</dbReference>
<dbReference type="InterPro" id="IPR036135">
    <property type="entry name" value="MoeA_linker/N_sf"/>
</dbReference>
<dbReference type="NCBIfam" id="NF045515">
    <property type="entry name" value="Glp_gephyrin"/>
    <property type="match status" value="1"/>
</dbReference>
<dbReference type="NCBIfam" id="TIGR00177">
    <property type="entry name" value="molyb_syn"/>
    <property type="match status" value="1"/>
</dbReference>
<dbReference type="PANTHER" id="PTHR10192:SF5">
    <property type="entry name" value="GEPHYRIN"/>
    <property type="match status" value="1"/>
</dbReference>
<dbReference type="PANTHER" id="PTHR10192">
    <property type="entry name" value="MOLYBDOPTERIN BIOSYNTHESIS PROTEIN"/>
    <property type="match status" value="1"/>
</dbReference>
<dbReference type="Pfam" id="PF00994">
    <property type="entry name" value="MoCF_biosynth"/>
    <property type="match status" value="1"/>
</dbReference>
<dbReference type="Pfam" id="PF03454">
    <property type="entry name" value="MoeA_C"/>
    <property type="match status" value="1"/>
</dbReference>
<dbReference type="Pfam" id="PF03453">
    <property type="entry name" value="MoeA_N"/>
    <property type="match status" value="1"/>
</dbReference>
<dbReference type="SMART" id="SM00852">
    <property type="entry name" value="MoCF_biosynth"/>
    <property type="match status" value="1"/>
</dbReference>
<dbReference type="SUPFAM" id="SSF63867">
    <property type="entry name" value="MoeA C-terminal domain-like"/>
    <property type="match status" value="1"/>
</dbReference>
<dbReference type="SUPFAM" id="SSF63882">
    <property type="entry name" value="MoeA N-terminal region -like"/>
    <property type="match status" value="1"/>
</dbReference>
<dbReference type="SUPFAM" id="SSF53218">
    <property type="entry name" value="Molybdenum cofactor biosynthesis proteins"/>
    <property type="match status" value="1"/>
</dbReference>
<protein>
    <recommendedName>
        <fullName>Molybdopterin molybdenumtransferase</fullName>
        <shortName>MPT Mo-transferase</shortName>
        <ecNumber>2.10.1.1</ecNumber>
    </recommendedName>
</protein>
<sequence length="419" mass="44976">MVVEKRNPIPVKEAIQRIVNQQSTMPAITVALEKSLNHILAEDIVATYDIPRFDKSPYDGFAIRSVDSQGASGQNRIEFKVIDHIGAGSVSDKLVGDHEAVRIMTGAQIPNGADAVVMFEQTIELEDTFTIRKPFSKNENISLKGEETTTGDVVLKKGQVINPGAIAVLATYGYAEVKVIKQPSVAVIATGSELLDVNDVLEDGKIRNSNGPMIRALAEKLGLEVGIYKTQQDDLDSGIQVVKEAMEKHDIVITTGGVSVGDFDYLPEIYKAVKAEVLFNKVAMRPGSVTTVAFADGKYLFGLSGNPSACFTGFELFVKPAVKHMCGALEVFPQIIKATLMEDFTKANPFTRFIRAKATLTSAGATVVPSGFNKSGAVVAIAHANCMVMLPGGSRGFKAGHTVDIILTESDAAEEELLL</sequence>
<keyword id="KW-0460">Magnesium</keyword>
<keyword id="KW-0479">Metal-binding</keyword>
<keyword id="KW-0500">Molybdenum</keyword>
<keyword id="KW-0501">Molybdenum cofactor biosynthesis</keyword>
<keyword id="KW-0808">Transferase</keyword>
<reference key="1">
    <citation type="journal article" date="2004" name="Proc. Natl. Acad. Sci. U.S.A.">
        <title>Complete genomes of two clinical Staphylococcus aureus strains: evidence for the rapid evolution of virulence and drug resistance.</title>
        <authorList>
            <person name="Holden M.T.G."/>
            <person name="Feil E.J."/>
            <person name="Lindsay J.A."/>
            <person name="Peacock S.J."/>
            <person name="Day N.P.J."/>
            <person name="Enright M.C."/>
            <person name="Foster T.J."/>
            <person name="Moore C.E."/>
            <person name="Hurst L."/>
            <person name="Atkin R."/>
            <person name="Barron A."/>
            <person name="Bason N."/>
            <person name="Bentley S.D."/>
            <person name="Chillingworth C."/>
            <person name="Chillingworth T."/>
            <person name="Churcher C."/>
            <person name="Clark L."/>
            <person name="Corton C."/>
            <person name="Cronin A."/>
            <person name="Doggett J."/>
            <person name="Dowd L."/>
            <person name="Feltwell T."/>
            <person name="Hance Z."/>
            <person name="Harris B."/>
            <person name="Hauser H."/>
            <person name="Holroyd S."/>
            <person name="Jagels K."/>
            <person name="James K.D."/>
            <person name="Lennard N."/>
            <person name="Line A."/>
            <person name="Mayes R."/>
            <person name="Moule S."/>
            <person name="Mungall K."/>
            <person name="Ormond D."/>
            <person name="Quail M.A."/>
            <person name="Rabbinowitsch E."/>
            <person name="Rutherford K.M."/>
            <person name="Sanders M."/>
            <person name="Sharp S."/>
            <person name="Simmonds M."/>
            <person name="Stevens K."/>
            <person name="Whitehead S."/>
            <person name="Barrell B.G."/>
            <person name="Spratt B.G."/>
            <person name="Parkhill J."/>
        </authorList>
    </citation>
    <scope>NUCLEOTIDE SEQUENCE [LARGE SCALE GENOMIC DNA]</scope>
    <source>
        <strain>MRSA252</strain>
    </source>
</reference>
<comment type="function">
    <text evidence="1">Catalyzes the insertion of molybdate into adenylated molybdopterin with the concomitant release of AMP.</text>
</comment>
<comment type="catalytic activity">
    <reaction>
        <text>adenylyl-molybdopterin + molybdate = Mo-molybdopterin + AMP + H(+)</text>
        <dbReference type="Rhea" id="RHEA:35047"/>
        <dbReference type="ChEBI" id="CHEBI:15378"/>
        <dbReference type="ChEBI" id="CHEBI:36264"/>
        <dbReference type="ChEBI" id="CHEBI:62727"/>
        <dbReference type="ChEBI" id="CHEBI:71302"/>
        <dbReference type="ChEBI" id="CHEBI:456215"/>
        <dbReference type="EC" id="2.10.1.1"/>
    </reaction>
</comment>
<comment type="cofactor">
    <cofactor evidence="1">
        <name>Mg(2+)</name>
        <dbReference type="ChEBI" id="CHEBI:18420"/>
    </cofactor>
    <text evidence="1">Binds 1 Mg(2+) ion per subunit.</text>
</comment>
<comment type="pathway">
    <text>Cofactor biosynthesis; molybdopterin biosynthesis.</text>
</comment>
<comment type="similarity">
    <text evidence="2">Belongs to the MoeA family.</text>
</comment>
<accession>Q6GEG1</accession>
<name>MOEA_STAAR</name>
<organism>
    <name type="scientific">Staphylococcus aureus (strain MRSA252)</name>
    <dbReference type="NCBI Taxonomy" id="282458"/>
    <lineage>
        <taxon>Bacteria</taxon>
        <taxon>Bacillati</taxon>
        <taxon>Bacillota</taxon>
        <taxon>Bacilli</taxon>
        <taxon>Bacillales</taxon>
        <taxon>Staphylococcaceae</taxon>
        <taxon>Staphylococcus</taxon>
    </lineage>
</organism>
<gene>
    <name type="primary">moeA</name>
    <name type="ordered locus">SAR2357</name>
</gene>
<proteinExistence type="inferred from homology"/>
<evidence type="ECO:0000250" key="1"/>
<evidence type="ECO:0000305" key="2"/>
<feature type="chain" id="PRO_0000170997" description="Molybdopterin molybdenumtransferase">
    <location>
        <begin position="1"/>
        <end position="419"/>
    </location>
</feature>